<feature type="chain" id="PRO_1000019867" description="Serine--tRNA ligase">
    <location>
        <begin position="1"/>
        <end position="426"/>
    </location>
</feature>
<feature type="binding site" evidence="1">
    <location>
        <begin position="233"/>
        <end position="235"/>
    </location>
    <ligand>
        <name>L-serine</name>
        <dbReference type="ChEBI" id="CHEBI:33384"/>
    </ligand>
</feature>
<feature type="binding site" evidence="1">
    <location>
        <begin position="264"/>
        <end position="266"/>
    </location>
    <ligand>
        <name>ATP</name>
        <dbReference type="ChEBI" id="CHEBI:30616"/>
    </ligand>
</feature>
<feature type="binding site" evidence="1">
    <location>
        <position position="287"/>
    </location>
    <ligand>
        <name>L-serine</name>
        <dbReference type="ChEBI" id="CHEBI:33384"/>
    </ligand>
</feature>
<feature type="binding site" evidence="1">
    <location>
        <begin position="351"/>
        <end position="354"/>
    </location>
    <ligand>
        <name>ATP</name>
        <dbReference type="ChEBI" id="CHEBI:30616"/>
    </ligand>
</feature>
<feature type="binding site" evidence="1">
    <location>
        <position position="387"/>
    </location>
    <ligand>
        <name>L-serine</name>
        <dbReference type="ChEBI" id="CHEBI:33384"/>
    </ligand>
</feature>
<evidence type="ECO:0000255" key="1">
    <source>
        <dbReference type="HAMAP-Rule" id="MF_00176"/>
    </source>
</evidence>
<protein>
    <recommendedName>
        <fullName evidence="1">Serine--tRNA ligase</fullName>
        <ecNumber evidence="1">6.1.1.11</ecNumber>
    </recommendedName>
    <alternativeName>
        <fullName evidence="1">Seryl-tRNA synthetase</fullName>
        <shortName evidence="1">SerRS</shortName>
    </alternativeName>
    <alternativeName>
        <fullName evidence="1">Seryl-tRNA(Ser/Sec) synthetase</fullName>
    </alternativeName>
</protein>
<gene>
    <name evidence="1" type="primary">serS</name>
    <name type="ordered locus">XC_2640</name>
</gene>
<dbReference type="EC" id="6.1.1.11" evidence="1"/>
<dbReference type="EMBL" id="CP000050">
    <property type="protein sequence ID" value="AAY49689.1"/>
    <property type="molecule type" value="Genomic_DNA"/>
</dbReference>
<dbReference type="RefSeq" id="WP_011036776.1">
    <property type="nucleotide sequence ID" value="NZ_CP155948.1"/>
</dbReference>
<dbReference type="SMR" id="Q4UTD4"/>
<dbReference type="GeneID" id="58013814"/>
<dbReference type="KEGG" id="xcb:XC_2640"/>
<dbReference type="HOGENOM" id="CLU_023797_1_1_6"/>
<dbReference type="UniPathway" id="UPA00906">
    <property type="reaction ID" value="UER00895"/>
</dbReference>
<dbReference type="Proteomes" id="UP000000420">
    <property type="component" value="Chromosome"/>
</dbReference>
<dbReference type="GO" id="GO:0005737">
    <property type="term" value="C:cytoplasm"/>
    <property type="evidence" value="ECO:0007669"/>
    <property type="project" value="UniProtKB-SubCell"/>
</dbReference>
<dbReference type="GO" id="GO:0005524">
    <property type="term" value="F:ATP binding"/>
    <property type="evidence" value="ECO:0007669"/>
    <property type="project" value="UniProtKB-UniRule"/>
</dbReference>
<dbReference type="GO" id="GO:0004828">
    <property type="term" value="F:serine-tRNA ligase activity"/>
    <property type="evidence" value="ECO:0007669"/>
    <property type="project" value="UniProtKB-UniRule"/>
</dbReference>
<dbReference type="GO" id="GO:0016260">
    <property type="term" value="P:selenocysteine biosynthetic process"/>
    <property type="evidence" value="ECO:0007669"/>
    <property type="project" value="UniProtKB-UniRule"/>
</dbReference>
<dbReference type="GO" id="GO:0006434">
    <property type="term" value="P:seryl-tRNA aminoacylation"/>
    <property type="evidence" value="ECO:0007669"/>
    <property type="project" value="UniProtKB-UniRule"/>
</dbReference>
<dbReference type="CDD" id="cd00770">
    <property type="entry name" value="SerRS_core"/>
    <property type="match status" value="1"/>
</dbReference>
<dbReference type="Gene3D" id="3.30.930.10">
    <property type="entry name" value="Bira Bifunctional Protein, Domain 2"/>
    <property type="match status" value="1"/>
</dbReference>
<dbReference type="Gene3D" id="1.10.287.40">
    <property type="entry name" value="Serine-tRNA synthetase, tRNA binding domain"/>
    <property type="match status" value="1"/>
</dbReference>
<dbReference type="HAMAP" id="MF_00176">
    <property type="entry name" value="Ser_tRNA_synth_type1"/>
    <property type="match status" value="1"/>
</dbReference>
<dbReference type="InterPro" id="IPR002314">
    <property type="entry name" value="aa-tRNA-synt_IIb"/>
</dbReference>
<dbReference type="InterPro" id="IPR006195">
    <property type="entry name" value="aa-tRNA-synth_II"/>
</dbReference>
<dbReference type="InterPro" id="IPR045864">
    <property type="entry name" value="aa-tRNA-synth_II/BPL/LPL"/>
</dbReference>
<dbReference type="InterPro" id="IPR002317">
    <property type="entry name" value="Ser-tRNA-ligase_type_1"/>
</dbReference>
<dbReference type="InterPro" id="IPR015866">
    <property type="entry name" value="Ser-tRNA-synth_1_N"/>
</dbReference>
<dbReference type="InterPro" id="IPR042103">
    <property type="entry name" value="SerRS_1_N_sf"/>
</dbReference>
<dbReference type="InterPro" id="IPR033729">
    <property type="entry name" value="SerRS_core"/>
</dbReference>
<dbReference type="InterPro" id="IPR010978">
    <property type="entry name" value="tRNA-bd_arm"/>
</dbReference>
<dbReference type="NCBIfam" id="TIGR00414">
    <property type="entry name" value="serS"/>
    <property type="match status" value="1"/>
</dbReference>
<dbReference type="PANTHER" id="PTHR43697:SF1">
    <property type="entry name" value="SERINE--TRNA LIGASE"/>
    <property type="match status" value="1"/>
</dbReference>
<dbReference type="PANTHER" id="PTHR43697">
    <property type="entry name" value="SERYL-TRNA SYNTHETASE"/>
    <property type="match status" value="1"/>
</dbReference>
<dbReference type="Pfam" id="PF02403">
    <property type="entry name" value="Seryl_tRNA_N"/>
    <property type="match status" value="1"/>
</dbReference>
<dbReference type="Pfam" id="PF00587">
    <property type="entry name" value="tRNA-synt_2b"/>
    <property type="match status" value="1"/>
</dbReference>
<dbReference type="PIRSF" id="PIRSF001529">
    <property type="entry name" value="Ser-tRNA-synth_IIa"/>
    <property type="match status" value="1"/>
</dbReference>
<dbReference type="PRINTS" id="PR00981">
    <property type="entry name" value="TRNASYNTHSER"/>
</dbReference>
<dbReference type="SUPFAM" id="SSF55681">
    <property type="entry name" value="Class II aaRS and biotin synthetases"/>
    <property type="match status" value="1"/>
</dbReference>
<dbReference type="SUPFAM" id="SSF46589">
    <property type="entry name" value="tRNA-binding arm"/>
    <property type="match status" value="1"/>
</dbReference>
<dbReference type="PROSITE" id="PS50862">
    <property type="entry name" value="AA_TRNA_LIGASE_II"/>
    <property type="match status" value="1"/>
</dbReference>
<organism>
    <name type="scientific">Xanthomonas campestris pv. campestris (strain 8004)</name>
    <dbReference type="NCBI Taxonomy" id="314565"/>
    <lineage>
        <taxon>Bacteria</taxon>
        <taxon>Pseudomonadati</taxon>
        <taxon>Pseudomonadota</taxon>
        <taxon>Gammaproteobacteria</taxon>
        <taxon>Lysobacterales</taxon>
        <taxon>Lysobacteraceae</taxon>
        <taxon>Xanthomonas</taxon>
    </lineage>
</organism>
<sequence length="426" mass="46903">MLDPALLRQHPADLAERLRSTRGFDLNTAELESLESERKRIQVRTQELQSLRNSKSKAIGQAKAKGEDVAALMAEVAGFGDELKASEDALDVIRAQLEGIALGIPNLPAANVPAGKDESENVEQARWGTPRQFDFAVKDHVELGAPHGWLDGETAAKLSGARFTVLRGPIARLHRALAQFMLDLHVGEHGYEETNVPLLVNADSMRGTGQLPKFEDDLFQTEVGDSKRYLIPTSEVPLTNIVRDAIVDAERLPLRMTAHSMCFRAEAGSGGRDTRGMIRQHQFEKVELVTACSPEDSEAEHQRMTRCAEVVLEKLGLPYRKVLLCTGDMGFSAIKTYDLEVWLPSQATYREISSCSNCGDFQARRMQARWRNPASGKPELLHTLNGSGTAVGRAMIAVMENYQNADGSIDVPDALRPYMGGLERIG</sequence>
<keyword id="KW-0030">Aminoacyl-tRNA synthetase</keyword>
<keyword id="KW-0067">ATP-binding</keyword>
<keyword id="KW-0963">Cytoplasm</keyword>
<keyword id="KW-0436">Ligase</keyword>
<keyword id="KW-0547">Nucleotide-binding</keyword>
<keyword id="KW-0648">Protein biosynthesis</keyword>
<accession>Q4UTD4</accession>
<reference key="1">
    <citation type="journal article" date="2005" name="Genome Res.">
        <title>Comparative and functional genomic analyses of the pathogenicity of phytopathogen Xanthomonas campestris pv. campestris.</title>
        <authorList>
            <person name="Qian W."/>
            <person name="Jia Y."/>
            <person name="Ren S.-X."/>
            <person name="He Y.-Q."/>
            <person name="Feng J.-X."/>
            <person name="Lu L.-F."/>
            <person name="Sun Q."/>
            <person name="Ying G."/>
            <person name="Tang D.-J."/>
            <person name="Tang H."/>
            <person name="Wu W."/>
            <person name="Hao P."/>
            <person name="Wang L."/>
            <person name="Jiang B.-L."/>
            <person name="Zeng S."/>
            <person name="Gu W.-Y."/>
            <person name="Lu G."/>
            <person name="Rong L."/>
            <person name="Tian Y."/>
            <person name="Yao Z."/>
            <person name="Fu G."/>
            <person name="Chen B."/>
            <person name="Fang R."/>
            <person name="Qiang B."/>
            <person name="Chen Z."/>
            <person name="Zhao G.-P."/>
            <person name="Tang J.-L."/>
            <person name="He C."/>
        </authorList>
    </citation>
    <scope>NUCLEOTIDE SEQUENCE [LARGE SCALE GENOMIC DNA]</scope>
    <source>
        <strain>8004</strain>
    </source>
</reference>
<name>SYS_XANC8</name>
<proteinExistence type="inferred from homology"/>
<comment type="function">
    <text evidence="1">Catalyzes the attachment of serine to tRNA(Ser). Is also able to aminoacylate tRNA(Sec) with serine, to form the misacylated tRNA L-seryl-tRNA(Sec), which will be further converted into selenocysteinyl-tRNA(Sec).</text>
</comment>
<comment type="catalytic activity">
    <reaction evidence="1">
        <text>tRNA(Ser) + L-serine + ATP = L-seryl-tRNA(Ser) + AMP + diphosphate + H(+)</text>
        <dbReference type="Rhea" id="RHEA:12292"/>
        <dbReference type="Rhea" id="RHEA-COMP:9669"/>
        <dbReference type="Rhea" id="RHEA-COMP:9703"/>
        <dbReference type="ChEBI" id="CHEBI:15378"/>
        <dbReference type="ChEBI" id="CHEBI:30616"/>
        <dbReference type="ChEBI" id="CHEBI:33019"/>
        <dbReference type="ChEBI" id="CHEBI:33384"/>
        <dbReference type="ChEBI" id="CHEBI:78442"/>
        <dbReference type="ChEBI" id="CHEBI:78533"/>
        <dbReference type="ChEBI" id="CHEBI:456215"/>
        <dbReference type="EC" id="6.1.1.11"/>
    </reaction>
</comment>
<comment type="catalytic activity">
    <reaction evidence="1">
        <text>tRNA(Sec) + L-serine + ATP = L-seryl-tRNA(Sec) + AMP + diphosphate + H(+)</text>
        <dbReference type="Rhea" id="RHEA:42580"/>
        <dbReference type="Rhea" id="RHEA-COMP:9742"/>
        <dbReference type="Rhea" id="RHEA-COMP:10128"/>
        <dbReference type="ChEBI" id="CHEBI:15378"/>
        <dbReference type="ChEBI" id="CHEBI:30616"/>
        <dbReference type="ChEBI" id="CHEBI:33019"/>
        <dbReference type="ChEBI" id="CHEBI:33384"/>
        <dbReference type="ChEBI" id="CHEBI:78442"/>
        <dbReference type="ChEBI" id="CHEBI:78533"/>
        <dbReference type="ChEBI" id="CHEBI:456215"/>
        <dbReference type="EC" id="6.1.1.11"/>
    </reaction>
</comment>
<comment type="pathway">
    <text evidence="1">Aminoacyl-tRNA biosynthesis; selenocysteinyl-tRNA(Sec) biosynthesis; L-seryl-tRNA(Sec) from L-serine and tRNA(Sec): step 1/1.</text>
</comment>
<comment type="subunit">
    <text evidence="1">Homodimer. The tRNA molecule binds across the dimer.</text>
</comment>
<comment type="subcellular location">
    <subcellularLocation>
        <location evidence="1">Cytoplasm</location>
    </subcellularLocation>
</comment>
<comment type="domain">
    <text evidence="1">Consists of two distinct domains, a catalytic core and a N-terminal extension that is involved in tRNA binding.</text>
</comment>
<comment type="similarity">
    <text evidence="1">Belongs to the class-II aminoacyl-tRNA synthetase family. Type-1 seryl-tRNA synthetase subfamily.</text>
</comment>